<dbReference type="EC" id="2.5.1.61" evidence="1"/>
<dbReference type="EMBL" id="CU458896">
    <property type="protein sequence ID" value="CAM64066.1"/>
    <property type="molecule type" value="Genomic_DNA"/>
</dbReference>
<dbReference type="RefSeq" id="WP_005061881.1">
    <property type="nucleotide sequence ID" value="NZ_MLCG01000001.1"/>
</dbReference>
<dbReference type="SMR" id="B1MHI5"/>
<dbReference type="GeneID" id="93380936"/>
<dbReference type="KEGG" id="mab:MAB_3992c"/>
<dbReference type="UniPathway" id="UPA00251">
    <property type="reaction ID" value="UER00319"/>
</dbReference>
<dbReference type="Proteomes" id="UP000007137">
    <property type="component" value="Chromosome"/>
</dbReference>
<dbReference type="GO" id="GO:0005737">
    <property type="term" value="C:cytoplasm"/>
    <property type="evidence" value="ECO:0007669"/>
    <property type="project" value="TreeGrafter"/>
</dbReference>
<dbReference type="GO" id="GO:0004418">
    <property type="term" value="F:hydroxymethylbilane synthase activity"/>
    <property type="evidence" value="ECO:0007669"/>
    <property type="project" value="UniProtKB-UniRule"/>
</dbReference>
<dbReference type="GO" id="GO:0006782">
    <property type="term" value="P:protoporphyrinogen IX biosynthetic process"/>
    <property type="evidence" value="ECO:0007669"/>
    <property type="project" value="UniProtKB-UniRule"/>
</dbReference>
<dbReference type="FunFam" id="3.30.160.40:FF:000001">
    <property type="entry name" value="Porphobilinogen deaminase"/>
    <property type="match status" value="1"/>
</dbReference>
<dbReference type="FunFam" id="3.40.190.10:FF:000005">
    <property type="entry name" value="Porphobilinogen deaminase"/>
    <property type="match status" value="1"/>
</dbReference>
<dbReference type="Gene3D" id="3.40.190.10">
    <property type="entry name" value="Periplasmic binding protein-like II"/>
    <property type="match status" value="2"/>
</dbReference>
<dbReference type="Gene3D" id="3.30.160.40">
    <property type="entry name" value="Porphobilinogen deaminase, C-terminal domain"/>
    <property type="match status" value="1"/>
</dbReference>
<dbReference type="HAMAP" id="MF_00260">
    <property type="entry name" value="Porphobil_deam"/>
    <property type="match status" value="1"/>
</dbReference>
<dbReference type="InterPro" id="IPR000860">
    <property type="entry name" value="HemC"/>
</dbReference>
<dbReference type="InterPro" id="IPR022419">
    <property type="entry name" value="Porphobilin_deaminase_cofac_BS"/>
</dbReference>
<dbReference type="InterPro" id="IPR022417">
    <property type="entry name" value="Porphobilin_deaminase_N"/>
</dbReference>
<dbReference type="InterPro" id="IPR022418">
    <property type="entry name" value="Porphobilinogen_deaminase_C"/>
</dbReference>
<dbReference type="InterPro" id="IPR036803">
    <property type="entry name" value="Porphobilinogen_deaminase_C_sf"/>
</dbReference>
<dbReference type="NCBIfam" id="TIGR00212">
    <property type="entry name" value="hemC"/>
    <property type="match status" value="1"/>
</dbReference>
<dbReference type="PANTHER" id="PTHR11557">
    <property type="entry name" value="PORPHOBILINOGEN DEAMINASE"/>
    <property type="match status" value="1"/>
</dbReference>
<dbReference type="PANTHER" id="PTHR11557:SF0">
    <property type="entry name" value="PORPHOBILINOGEN DEAMINASE"/>
    <property type="match status" value="1"/>
</dbReference>
<dbReference type="Pfam" id="PF01379">
    <property type="entry name" value="Porphobil_deam"/>
    <property type="match status" value="1"/>
</dbReference>
<dbReference type="Pfam" id="PF03900">
    <property type="entry name" value="Porphobil_deamC"/>
    <property type="match status" value="1"/>
</dbReference>
<dbReference type="PIRSF" id="PIRSF001438">
    <property type="entry name" value="4pyrrol_synth_OHMeBilane_synth"/>
    <property type="match status" value="1"/>
</dbReference>
<dbReference type="PRINTS" id="PR00151">
    <property type="entry name" value="PORPHBDMNASE"/>
</dbReference>
<dbReference type="SUPFAM" id="SSF53850">
    <property type="entry name" value="Periplasmic binding protein-like II"/>
    <property type="match status" value="1"/>
</dbReference>
<dbReference type="SUPFAM" id="SSF54782">
    <property type="entry name" value="Porphobilinogen deaminase (hydroxymethylbilane synthase), C-terminal domain"/>
    <property type="match status" value="1"/>
</dbReference>
<dbReference type="PROSITE" id="PS00533">
    <property type="entry name" value="PORPHOBILINOGEN_DEAM"/>
    <property type="match status" value="1"/>
</dbReference>
<proteinExistence type="inferred from homology"/>
<sequence length="306" mass="31661">MIRIGTRGSLLATTQAGGIRDALRAKGHEAELVIVTTAGDQSAAPVEQIGVGVFTAALREAIADDVVDVAVHSYKDLPTAADPRFVIPAIPPREDYRDALVARDGLVLGELPAGSVIGTSSPRRAAQLRALGLGLEIRPLRGNLDTRLSRVSNGDLDGVVVARAGLARIGRLDHITETLEPVQVLPAPAQGALAVECRSEATDLVAVLAELDHADTRAAVTAERALLAELEAGCTAPVGAIAEVVESIDEEGRVFDELSLRGCAAALDGSDVIRASGIGTPDRAAELGLAVARELLDLGARALIGR</sequence>
<accession>B1MHI5</accession>
<evidence type="ECO:0000255" key="1">
    <source>
        <dbReference type="HAMAP-Rule" id="MF_00260"/>
    </source>
</evidence>
<name>HEM3_MYCA9</name>
<protein>
    <recommendedName>
        <fullName evidence="1">Porphobilinogen deaminase</fullName>
        <shortName evidence="1">PBG</shortName>
        <ecNumber evidence="1">2.5.1.61</ecNumber>
    </recommendedName>
    <alternativeName>
        <fullName evidence="1">Hydroxymethylbilane synthase</fullName>
        <shortName evidence="1">HMBS</shortName>
    </alternativeName>
    <alternativeName>
        <fullName evidence="1">Pre-uroporphyrinogen synthase</fullName>
    </alternativeName>
</protein>
<gene>
    <name evidence="1" type="primary">hemC</name>
    <name type="ordered locus">MAB_3992c</name>
</gene>
<comment type="function">
    <text evidence="1">Tetrapolymerization of the monopyrrole PBG into the hydroxymethylbilane pre-uroporphyrinogen in several discrete steps.</text>
</comment>
<comment type="catalytic activity">
    <reaction evidence="1">
        <text>4 porphobilinogen + H2O = hydroxymethylbilane + 4 NH4(+)</text>
        <dbReference type="Rhea" id="RHEA:13185"/>
        <dbReference type="ChEBI" id="CHEBI:15377"/>
        <dbReference type="ChEBI" id="CHEBI:28938"/>
        <dbReference type="ChEBI" id="CHEBI:57845"/>
        <dbReference type="ChEBI" id="CHEBI:58126"/>
        <dbReference type="EC" id="2.5.1.61"/>
    </reaction>
</comment>
<comment type="cofactor">
    <cofactor evidence="1">
        <name>dipyrromethane</name>
        <dbReference type="ChEBI" id="CHEBI:60342"/>
    </cofactor>
    <text evidence="1">Binds 1 dipyrromethane group covalently.</text>
</comment>
<comment type="pathway">
    <text evidence="1">Porphyrin-containing compound metabolism; protoporphyrin-IX biosynthesis; coproporphyrinogen-III from 5-aminolevulinate: step 2/4.</text>
</comment>
<comment type="subunit">
    <text evidence="1">Monomer.</text>
</comment>
<comment type="miscellaneous">
    <text evidence="1">The porphobilinogen subunits are added to the dipyrromethane group.</text>
</comment>
<comment type="similarity">
    <text evidence="1">Belongs to the HMBS family.</text>
</comment>
<organism>
    <name type="scientific">Mycobacteroides abscessus (strain ATCC 19977 / DSM 44196 / CCUG 20993 / CIP 104536 / JCM 13569 / NCTC 13031 / TMC 1543 / L948)</name>
    <name type="common">Mycobacterium abscessus</name>
    <dbReference type="NCBI Taxonomy" id="561007"/>
    <lineage>
        <taxon>Bacteria</taxon>
        <taxon>Bacillati</taxon>
        <taxon>Actinomycetota</taxon>
        <taxon>Actinomycetes</taxon>
        <taxon>Mycobacteriales</taxon>
        <taxon>Mycobacteriaceae</taxon>
        <taxon>Mycobacteroides</taxon>
        <taxon>Mycobacteroides abscessus</taxon>
    </lineage>
</organism>
<keyword id="KW-0627">Porphyrin biosynthesis</keyword>
<keyword id="KW-1185">Reference proteome</keyword>
<keyword id="KW-0808">Transferase</keyword>
<reference key="1">
    <citation type="journal article" date="2009" name="PLoS ONE">
        <title>Non mycobacterial virulence genes in the genome of the emerging pathogen Mycobacterium abscessus.</title>
        <authorList>
            <person name="Ripoll F."/>
            <person name="Pasek S."/>
            <person name="Schenowitz C."/>
            <person name="Dossat C."/>
            <person name="Barbe V."/>
            <person name="Rottman M."/>
            <person name="Macheras E."/>
            <person name="Heym B."/>
            <person name="Herrmann J.L."/>
            <person name="Daffe M."/>
            <person name="Brosch R."/>
            <person name="Risler J.L."/>
            <person name="Gaillard J.L."/>
        </authorList>
    </citation>
    <scope>NUCLEOTIDE SEQUENCE [LARGE SCALE GENOMIC DNA]</scope>
    <source>
        <strain>ATCC 19977 / DSM 44196 / CCUG 20993 / CIP 104536 / JCM 13569 / NCTC 13031 / TMC 1543 / L948</strain>
    </source>
</reference>
<feature type="chain" id="PRO_1000114163" description="Porphobilinogen deaminase">
    <location>
        <begin position="1"/>
        <end position="306"/>
    </location>
</feature>
<feature type="modified residue" description="S-(dipyrrolylmethanemethyl)cysteine" evidence="1">
    <location>
        <position position="234"/>
    </location>
</feature>